<keyword id="KW-0030">Aminoacyl-tRNA synthetase</keyword>
<keyword id="KW-0067">ATP-binding</keyword>
<keyword id="KW-0963">Cytoplasm</keyword>
<keyword id="KW-0436">Ligase</keyword>
<keyword id="KW-0460">Magnesium</keyword>
<keyword id="KW-0479">Metal-binding</keyword>
<keyword id="KW-0547">Nucleotide-binding</keyword>
<keyword id="KW-0648">Protein biosynthesis</keyword>
<proteinExistence type="inferred from homology"/>
<organism>
    <name type="scientific">Pseudomonas fluorescens (strain ATCC BAA-477 / NRRL B-23932 / Pf-5)</name>
    <dbReference type="NCBI Taxonomy" id="220664"/>
    <lineage>
        <taxon>Bacteria</taxon>
        <taxon>Pseudomonadati</taxon>
        <taxon>Pseudomonadota</taxon>
        <taxon>Gammaproteobacteria</taxon>
        <taxon>Pseudomonadales</taxon>
        <taxon>Pseudomonadaceae</taxon>
        <taxon>Pseudomonas</taxon>
    </lineage>
</organism>
<sequence>MSDQQLDPQALQQEENSLIALRKEKLAAERAKGNAFPNDFRRENYCEDLQKKYADKTKEELAEAAIPVKVAGRIMLNRGSFMVIQDMTGRIQVYVNRKTLSEETLASVKTWDMGDIIAAEGTLARSGKGDLYVEMTNVRLLTKSLRPLPDKHHGLTDTEQRYRQRYVDLIVNEEVRQTFRVRSQVIAHIRSFLMKRDFLEVETPMLQTIPGGAAAKPFETHHNALDMEMFLRIAPELYLKRLVVGGFEKVFEINRNFRNEGVSTRHNPEFTMLEFYQAYADYEDNMDLTEELFRELAQLVLGSTDVPYGDKVFHFGEPFARLSVFDSILKYNPELTADDLNDIDKARAIAKKAGAKVLGFEGLGKLQVMIFEELVEHKLEQPHFITQYPFEVSPLARRNDDNPNVTDRFELFIGGREIANAYSELNDAEDQAERFMAQVADKDAGDDEAMHYDADFVRALEYGMPPTAGEGIGIDRLVMLLTNSPSIRDVILFPHMRPQA</sequence>
<protein>
    <recommendedName>
        <fullName evidence="1">Lysine--tRNA ligase</fullName>
        <ecNumber evidence="1">6.1.1.6</ecNumber>
    </recommendedName>
    <alternativeName>
        <fullName evidence="1">Lysyl-tRNA synthetase</fullName>
        <shortName evidence="1">LysRS</shortName>
    </alternativeName>
</protein>
<name>SYK_PSEF5</name>
<dbReference type="EC" id="6.1.1.6" evidence="1"/>
<dbReference type="EMBL" id="CP000076">
    <property type="protein sequence ID" value="AAY90425.1"/>
    <property type="molecule type" value="Genomic_DNA"/>
</dbReference>
<dbReference type="RefSeq" id="WP_011059486.1">
    <property type="nucleotide sequence ID" value="NC_004129.6"/>
</dbReference>
<dbReference type="SMR" id="Q4KHL4"/>
<dbReference type="STRING" id="220664.PFL_1138"/>
<dbReference type="GeneID" id="57474142"/>
<dbReference type="KEGG" id="pfl:PFL_1138"/>
<dbReference type="PATRIC" id="fig|220664.5.peg.1169"/>
<dbReference type="eggNOG" id="COG1190">
    <property type="taxonomic scope" value="Bacteria"/>
</dbReference>
<dbReference type="HOGENOM" id="CLU_008255_6_0_6"/>
<dbReference type="Proteomes" id="UP000008540">
    <property type="component" value="Chromosome"/>
</dbReference>
<dbReference type="GO" id="GO:0005829">
    <property type="term" value="C:cytosol"/>
    <property type="evidence" value="ECO:0007669"/>
    <property type="project" value="TreeGrafter"/>
</dbReference>
<dbReference type="GO" id="GO:0005524">
    <property type="term" value="F:ATP binding"/>
    <property type="evidence" value="ECO:0007669"/>
    <property type="project" value="UniProtKB-UniRule"/>
</dbReference>
<dbReference type="GO" id="GO:0004824">
    <property type="term" value="F:lysine-tRNA ligase activity"/>
    <property type="evidence" value="ECO:0007669"/>
    <property type="project" value="UniProtKB-UniRule"/>
</dbReference>
<dbReference type="GO" id="GO:0000287">
    <property type="term" value="F:magnesium ion binding"/>
    <property type="evidence" value="ECO:0007669"/>
    <property type="project" value="UniProtKB-UniRule"/>
</dbReference>
<dbReference type="GO" id="GO:0000049">
    <property type="term" value="F:tRNA binding"/>
    <property type="evidence" value="ECO:0007669"/>
    <property type="project" value="TreeGrafter"/>
</dbReference>
<dbReference type="GO" id="GO:0006430">
    <property type="term" value="P:lysyl-tRNA aminoacylation"/>
    <property type="evidence" value="ECO:0007669"/>
    <property type="project" value="UniProtKB-UniRule"/>
</dbReference>
<dbReference type="CDD" id="cd00775">
    <property type="entry name" value="LysRS_core"/>
    <property type="match status" value="1"/>
</dbReference>
<dbReference type="CDD" id="cd04322">
    <property type="entry name" value="LysRS_N"/>
    <property type="match status" value="1"/>
</dbReference>
<dbReference type="FunFam" id="2.40.50.140:FF:000024">
    <property type="entry name" value="Lysine--tRNA ligase"/>
    <property type="match status" value="1"/>
</dbReference>
<dbReference type="FunFam" id="3.30.930.10:FF:000001">
    <property type="entry name" value="Lysine--tRNA ligase"/>
    <property type="match status" value="1"/>
</dbReference>
<dbReference type="Gene3D" id="3.30.930.10">
    <property type="entry name" value="Bira Bifunctional Protein, Domain 2"/>
    <property type="match status" value="1"/>
</dbReference>
<dbReference type="Gene3D" id="2.40.50.140">
    <property type="entry name" value="Nucleic acid-binding proteins"/>
    <property type="match status" value="1"/>
</dbReference>
<dbReference type="HAMAP" id="MF_00252">
    <property type="entry name" value="Lys_tRNA_synth_class2"/>
    <property type="match status" value="1"/>
</dbReference>
<dbReference type="InterPro" id="IPR004364">
    <property type="entry name" value="Aa-tRNA-synt_II"/>
</dbReference>
<dbReference type="InterPro" id="IPR006195">
    <property type="entry name" value="aa-tRNA-synth_II"/>
</dbReference>
<dbReference type="InterPro" id="IPR045864">
    <property type="entry name" value="aa-tRNA-synth_II/BPL/LPL"/>
</dbReference>
<dbReference type="InterPro" id="IPR002313">
    <property type="entry name" value="Lys-tRNA-ligase_II"/>
</dbReference>
<dbReference type="InterPro" id="IPR044136">
    <property type="entry name" value="Lys-tRNA-ligase_II_N"/>
</dbReference>
<dbReference type="InterPro" id="IPR018149">
    <property type="entry name" value="Lys-tRNA-synth_II_C"/>
</dbReference>
<dbReference type="InterPro" id="IPR012340">
    <property type="entry name" value="NA-bd_OB-fold"/>
</dbReference>
<dbReference type="InterPro" id="IPR004365">
    <property type="entry name" value="NA-bd_OB_tRNA"/>
</dbReference>
<dbReference type="NCBIfam" id="TIGR00499">
    <property type="entry name" value="lysS_bact"/>
    <property type="match status" value="1"/>
</dbReference>
<dbReference type="NCBIfam" id="NF001756">
    <property type="entry name" value="PRK00484.1"/>
    <property type="match status" value="1"/>
</dbReference>
<dbReference type="PANTHER" id="PTHR42918:SF15">
    <property type="entry name" value="LYSINE--TRNA LIGASE, CHLOROPLASTIC_MITOCHONDRIAL"/>
    <property type="match status" value="1"/>
</dbReference>
<dbReference type="PANTHER" id="PTHR42918">
    <property type="entry name" value="LYSYL-TRNA SYNTHETASE"/>
    <property type="match status" value="1"/>
</dbReference>
<dbReference type="Pfam" id="PF00152">
    <property type="entry name" value="tRNA-synt_2"/>
    <property type="match status" value="1"/>
</dbReference>
<dbReference type="Pfam" id="PF01336">
    <property type="entry name" value="tRNA_anti-codon"/>
    <property type="match status" value="1"/>
</dbReference>
<dbReference type="PRINTS" id="PR00982">
    <property type="entry name" value="TRNASYNTHLYS"/>
</dbReference>
<dbReference type="SUPFAM" id="SSF55681">
    <property type="entry name" value="Class II aaRS and biotin synthetases"/>
    <property type="match status" value="1"/>
</dbReference>
<dbReference type="SUPFAM" id="SSF50249">
    <property type="entry name" value="Nucleic acid-binding proteins"/>
    <property type="match status" value="1"/>
</dbReference>
<dbReference type="PROSITE" id="PS50862">
    <property type="entry name" value="AA_TRNA_LIGASE_II"/>
    <property type="match status" value="1"/>
</dbReference>
<comment type="catalytic activity">
    <reaction evidence="1">
        <text>tRNA(Lys) + L-lysine + ATP = L-lysyl-tRNA(Lys) + AMP + diphosphate</text>
        <dbReference type="Rhea" id="RHEA:20792"/>
        <dbReference type="Rhea" id="RHEA-COMP:9696"/>
        <dbReference type="Rhea" id="RHEA-COMP:9697"/>
        <dbReference type="ChEBI" id="CHEBI:30616"/>
        <dbReference type="ChEBI" id="CHEBI:32551"/>
        <dbReference type="ChEBI" id="CHEBI:33019"/>
        <dbReference type="ChEBI" id="CHEBI:78442"/>
        <dbReference type="ChEBI" id="CHEBI:78529"/>
        <dbReference type="ChEBI" id="CHEBI:456215"/>
        <dbReference type="EC" id="6.1.1.6"/>
    </reaction>
</comment>
<comment type="cofactor">
    <cofactor evidence="1">
        <name>Mg(2+)</name>
        <dbReference type="ChEBI" id="CHEBI:18420"/>
    </cofactor>
    <text evidence="1">Binds 3 Mg(2+) ions per subunit.</text>
</comment>
<comment type="subunit">
    <text evidence="1">Homodimer.</text>
</comment>
<comment type="subcellular location">
    <subcellularLocation>
        <location evidence="1">Cytoplasm</location>
    </subcellularLocation>
</comment>
<comment type="similarity">
    <text evidence="1">Belongs to the class-II aminoacyl-tRNA synthetase family.</text>
</comment>
<reference key="1">
    <citation type="journal article" date="2005" name="Nat. Biotechnol.">
        <title>Complete genome sequence of the plant commensal Pseudomonas fluorescens Pf-5.</title>
        <authorList>
            <person name="Paulsen I.T."/>
            <person name="Press C.M."/>
            <person name="Ravel J."/>
            <person name="Kobayashi D.Y."/>
            <person name="Myers G.S.A."/>
            <person name="Mavrodi D.V."/>
            <person name="DeBoy R.T."/>
            <person name="Seshadri R."/>
            <person name="Ren Q."/>
            <person name="Madupu R."/>
            <person name="Dodson R.J."/>
            <person name="Durkin A.S."/>
            <person name="Brinkac L.M."/>
            <person name="Daugherty S.C."/>
            <person name="Sullivan S.A."/>
            <person name="Rosovitz M.J."/>
            <person name="Gwinn M.L."/>
            <person name="Zhou L."/>
            <person name="Schneider D.J."/>
            <person name="Cartinhour S.W."/>
            <person name="Nelson W.C."/>
            <person name="Weidman J."/>
            <person name="Watkins K."/>
            <person name="Tran K."/>
            <person name="Khouri H."/>
            <person name="Pierson E.A."/>
            <person name="Pierson L.S. III"/>
            <person name="Thomashow L.S."/>
            <person name="Loper J.E."/>
        </authorList>
    </citation>
    <scope>NUCLEOTIDE SEQUENCE [LARGE SCALE GENOMIC DNA]</scope>
    <source>
        <strain>ATCC BAA-477 / NRRL B-23932 / Pf-5</strain>
    </source>
</reference>
<accession>Q4KHL4</accession>
<evidence type="ECO:0000255" key="1">
    <source>
        <dbReference type="HAMAP-Rule" id="MF_00252"/>
    </source>
</evidence>
<feature type="chain" id="PRO_1000012910" description="Lysine--tRNA ligase">
    <location>
        <begin position="1"/>
        <end position="500"/>
    </location>
</feature>
<feature type="binding site" evidence="1">
    <location>
        <position position="410"/>
    </location>
    <ligand>
        <name>Mg(2+)</name>
        <dbReference type="ChEBI" id="CHEBI:18420"/>
        <label>1</label>
    </ligand>
</feature>
<feature type="binding site" evidence="1">
    <location>
        <position position="417"/>
    </location>
    <ligand>
        <name>Mg(2+)</name>
        <dbReference type="ChEBI" id="CHEBI:18420"/>
        <label>1</label>
    </ligand>
</feature>
<feature type="binding site" evidence="1">
    <location>
        <position position="417"/>
    </location>
    <ligand>
        <name>Mg(2+)</name>
        <dbReference type="ChEBI" id="CHEBI:18420"/>
        <label>2</label>
    </ligand>
</feature>
<gene>
    <name evidence="1" type="primary">lysS</name>
    <name type="ordered locus">PFL_1138</name>
</gene>